<protein>
    <recommendedName>
        <fullName evidence="1">3-isopropylmalate dehydratase large subunit</fullName>
        <ecNumber evidence="1">4.2.1.33</ecNumber>
    </recommendedName>
    <alternativeName>
        <fullName evidence="1">Alpha-IPM isomerase</fullName>
        <shortName evidence="1">IPMI</shortName>
    </alternativeName>
    <alternativeName>
        <fullName evidence="1">Isopropylmalate isomerase</fullName>
    </alternativeName>
</protein>
<feature type="chain" id="PRO_0000426785" description="3-isopropylmalate dehydratase large subunit">
    <location>
        <begin position="1"/>
        <end position="473"/>
    </location>
</feature>
<feature type="binding site" evidence="1">
    <location>
        <position position="354"/>
    </location>
    <ligand>
        <name>[4Fe-4S] cluster</name>
        <dbReference type="ChEBI" id="CHEBI:49883"/>
    </ligand>
</feature>
<feature type="binding site" evidence="1">
    <location>
        <position position="414"/>
    </location>
    <ligand>
        <name>[4Fe-4S] cluster</name>
        <dbReference type="ChEBI" id="CHEBI:49883"/>
    </ligand>
</feature>
<feature type="binding site" evidence="1">
    <location>
        <position position="417"/>
    </location>
    <ligand>
        <name>[4Fe-4S] cluster</name>
        <dbReference type="ChEBI" id="CHEBI:49883"/>
    </ligand>
</feature>
<keyword id="KW-0004">4Fe-4S</keyword>
<keyword id="KW-0028">Amino-acid biosynthesis</keyword>
<keyword id="KW-0100">Branched-chain amino acid biosynthesis</keyword>
<keyword id="KW-0408">Iron</keyword>
<keyword id="KW-0411">Iron-sulfur</keyword>
<keyword id="KW-0432">Leucine biosynthesis</keyword>
<keyword id="KW-0456">Lyase</keyword>
<keyword id="KW-0479">Metal-binding</keyword>
<keyword id="KW-1185">Reference proteome</keyword>
<name>LEUC_MYCTO</name>
<sequence>MALQTGEPRTLAEKIWDDHIVVSGGGCAPDLIYIDLHLVHEVTSPQAFDGLRLAGRRVRRPELTLATEDHNVPTVDIDQPIADPVSRTQVETLRRNCAEFGIRLHSMGDIEQGIVHVVGPQLGLTQPGMTIVCGDSHTSTHGAFGALAMGIGTSEVEHVLATQTLPLRPFKTMAVNVDGRLPDGVSAKDIILALIAKIGTGGGQGHVIEYRGSAIESLSMEGRMTICNMSIEAGARAGMVAPDETTYAFLRGRPHAPTGAQWDTALVYWQRLRTDVGAVFDTEVYLDAASLSPFVTWGTNPGQGVPLAAAVPDPQLMTDDAERQAAEKALAYMDLRPGTAMRDIAVDAVFVGSCTNGRIEDLRVVAEVLRGRKVADGVRMLIVPGSMRVRAQAEAEGLGEIFTDAGAQWRQAGCSMCLGMNPDQLASGERCAATSNRNFEGRQGAGGRTHLVSPAVAAATAVRGTLSSPADLN</sequence>
<comment type="function">
    <text evidence="1">Catalyzes the isomerization between 2-isopropylmalate and 3-isopropylmalate, via the formation of 2-isopropylmaleate.</text>
</comment>
<comment type="catalytic activity">
    <reaction evidence="1">
        <text>(2R,3S)-3-isopropylmalate = (2S)-2-isopropylmalate</text>
        <dbReference type="Rhea" id="RHEA:32287"/>
        <dbReference type="ChEBI" id="CHEBI:1178"/>
        <dbReference type="ChEBI" id="CHEBI:35121"/>
        <dbReference type="EC" id="4.2.1.33"/>
    </reaction>
</comment>
<comment type="cofactor">
    <cofactor evidence="1">
        <name>[4Fe-4S] cluster</name>
        <dbReference type="ChEBI" id="CHEBI:49883"/>
    </cofactor>
    <text evidence="1">Binds 1 [4Fe-4S] cluster per subunit.</text>
</comment>
<comment type="pathway">
    <text evidence="1">Amino-acid biosynthesis; L-leucine biosynthesis; L-leucine from 3-methyl-2-oxobutanoate: step 2/4.</text>
</comment>
<comment type="subunit">
    <text evidence="1">Heterodimer of LeuC and LeuD.</text>
</comment>
<comment type="similarity">
    <text evidence="1">Belongs to the aconitase/IPM isomerase family. LeuC type 1 subfamily.</text>
</comment>
<dbReference type="EC" id="4.2.1.33" evidence="1"/>
<dbReference type="EMBL" id="AE000516">
    <property type="protein sequence ID" value="AAK47395.1"/>
    <property type="molecule type" value="Genomic_DNA"/>
</dbReference>
<dbReference type="PIR" id="G70853">
    <property type="entry name" value="G70853"/>
</dbReference>
<dbReference type="RefSeq" id="WP_003899570.1">
    <property type="nucleotide sequence ID" value="NZ_KK341227.1"/>
</dbReference>
<dbReference type="SMR" id="P9WQF4"/>
<dbReference type="GeneID" id="45426977"/>
<dbReference type="KEGG" id="mtc:MT3066"/>
<dbReference type="PATRIC" id="fig|83331.31.peg.3309"/>
<dbReference type="HOGENOM" id="CLU_006714_3_4_11"/>
<dbReference type="UniPathway" id="UPA00048">
    <property type="reaction ID" value="UER00071"/>
</dbReference>
<dbReference type="Proteomes" id="UP000001020">
    <property type="component" value="Chromosome"/>
</dbReference>
<dbReference type="GO" id="GO:0003861">
    <property type="term" value="F:3-isopropylmalate dehydratase activity"/>
    <property type="evidence" value="ECO:0007669"/>
    <property type="project" value="UniProtKB-UniRule"/>
</dbReference>
<dbReference type="GO" id="GO:0051539">
    <property type="term" value="F:4 iron, 4 sulfur cluster binding"/>
    <property type="evidence" value="ECO:0007669"/>
    <property type="project" value="UniProtKB-KW"/>
</dbReference>
<dbReference type="GO" id="GO:0046872">
    <property type="term" value="F:metal ion binding"/>
    <property type="evidence" value="ECO:0007669"/>
    <property type="project" value="UniProtKB-KW"/>
</dbReference>
<dbReference type="GO" id="GO:0009098">
    <property type="term" value="P:L-leucine biosynthetic process"/>
    <property type="evidence" value="ECO:0007669"/>
    <property type="project" value="UniProtKB-UniRule"/>
</dbReference>
<dbReference type="CDD" id="cd01583">
    <property type="entry name" value="IPMI"/>
    <property type="match status" value="1"/>
</dbReference>
<dbReference type="FunFam" id="3.30.499.10:FF:000006">
    <property type="entry name" value="3-isopropylmalate dehydratase large subunit"/>
    <property type="match status" value="1"/>
</dbReference>
<dbReference type="FunFam" id="3.30.499.10:FF:000007">
    <property type="entry name" value="3-isopropylmalate dehydratase large subunit"/>
    <property type="match status" value="1"/>
</dbReference>
<dbReference type="Gene3D" id="3.30.499.10">
    <property type="entry name" value="Aconitase, domain 3"/>
    <property type="match status" value="2"/>
</dbReference>
<dbReference type="HAMAP" id="MF_01026">
    <property type="entry name" value="LeuC_type1"/>
    <property type="match status" value="1"/>
</dbReference>
<dbReference type="InterPro" id="IPR004430">
    <property type="entry name" value="3-IsopropMal_deHydase_lsu"/>
</dbReference>
<dbReference type="InterPro" id="IPR015931">
    <property type="entry name" value="Acnase/IPM_dHydase_lsu_aba_1/3"/>
</dbReference>
<dbReference type="InterPro" id="IPR001030">
    <property type="entry name" value="Acoase/IPM_deHydtase_lsu_aba"/>
</dbReference>
<dbReference type="InterPro" id="IPR018136">
    <property type="entry name" value="Aconitase_4Fe-4S_BS"/>
</dbReference>
<dbReference type="InterPro" id="IPR036008">
    <property type="entry name" value="Aconitase_4Fe-4S_dom"/>
</dbReference>
<dbReference type="InterPro" id="IPR050067">
    <property type="entry name" value="IPM_dehydratase_rel_enz"/>
</dbReference>
<dbReference type="InterPro" id="IPR033941">
    <property type="entry name" value="IPMI_cat"/>
</dbReference>
<dbReference type="NCBIfam" id="TIGR00170">
    <property type="entry name" value="leuC"/>
    <property type="match status" value="1"/>
</dbReference>
<dbReference type="NCBIfam" id="NF004016">
    <property type="entry name" value="PRK05478.1"/>
    <property type="match status" value="1"/>
</dbReference>
<dbReference type="NCBIfam" id="NF009116">
    <property type="entry name" value="PRK12466.1"/>
    <property type="match status" value="1"/>
</dbReference>
<dbReference type="PANTHER" id="PTHR43822:SF9">
    <property type="entry name" value="3-ISOPROPYLMALATE DEHYDRATASE"/>
    <property type="match status" value="1"/>
</dbReference>
<dbReference type="PANTHER" id="PTHR43822">
    <property type="entry name" value="HOMOACONITASE, MITOCHONDRIAL-RELATED"/>
    <property type="match status" value="1"/>
</dbReference>
<dbReference type="Pfam" id="PF00330">
    <property type="entry name" value="Aconitase"/>
    <property type="match status" value="1"/>
</dbReference>
<dbReference type="PRINTS" id="PR00415">
    <property type="entry name" value="ACONITASE"/>
</dbReference>
<dbReference type="SUPFAM" id="SSF53732">
    <property type="entry name" value="Aconitase iron-sulfur domain"/>
    <property type="match status" value="1"/>
</dbReference>
<dbReference type="PROSITE" id="PS00450">
    <property type="entry name" value="ACONITASE_1"/>
    <property type="match status" value="1"/>
</dbReference>
<dbReference type="PROSITE" id="PS01244">
    <property type="entry name" value="ACONITASE_2"/>
    <property type="match status" value="1"/>
</dbReference>
<reference key="1">
    <citation type="journal article" date="2002" name="J. Bacteriol.">
        <title>Whole-genome comparison of Mycobacterium tuberculosis clinical and laboratory strains.</title>
        <authorList>
            <person name="Fleischmann R.D."/>
            <person name="Alland D."/>
            <person name="Eisen J.A."/>
            <person name="Carpenter L."/>
            <person name="White O."/>
            <person name="Peterson J.D."/>
            <person name="DeBoy R.T."/>
            <person name="Dodson R.J."/>
            <person name="Gwinn M.L."/>
            <person name="Haft D.H."/>
            <person name="Hickey E.K."/>
            <person name="Kolonay J.F."/>
            <person name="Nelson W.C."/>
            <person name="Umayam L.A."/>
            <person name="Ermolaeva M.D."/>
            <person name="Salzberg S.L."/>
            <person name="Delcher A."/>
            <person name="Utterback T.R."/>
            <person name="Weidman J.F."/>
            <person name="Khouri H.M."/>
            <person name="Gill J."/>
            <person name="Mikula A."/>
            <person name="Bishai W."/>
            <person name="Jacobs W.R. Jr."/>
            <person name="Venter J.C."/>
            <person name="Fraser C.M."/>
        </authorList>
    </citation>
    <scope>NUCLEOTIDE SEQUENCE [LARGE SCALE GENOMIC DNA]</scope>
    <source>
        <strain>CDC 1551 / Oshkosh</strain>
    </source>
</reference>
<proteinExistence type="inferred from homology"/>
<evidence type="ECO:0000255" key="1">
    <source>
        <dbReference type="HAMAP-Rule" id="MF_01026"/>
    </source>
</evidence>
<organism>
    <name type="scientific">Mycobacterium tuberculosis (strain CDC 1551 / Oshkosh)</name>
    <dbReference type="NCBI Taxonomy" id="83331"/>
    <lineage>
        <taxon>Bacteria</taxon>
        <taxon>Bacillati</taxon>
        <taxon>Actinomycetota</taxon>
        <taxon>Actinomycetes</taxon>
        <taxon>Mycobacteriales</taxon>
        <taxon>Mycobacteriaceae</taxon>
        <taxon>Mycobacterium</taxon>
        <taxon>Mycobacterium tuberculosis complex</taxon>
    </lineage>
</organism>
<accession>P9WQF4</accession>
<accession>L0TDZ8</accession>
<accession>O53237</accession>
<gene>
    <name evidence="1" type="primary">leuC</name>
    <name type="ordered locus">MT3066</name>
</gene>